<sequence length="318" mass="37203">MLNPLNIEYLYLSKLFDNSLIVFNKRQLFRFFVRFFFMTAALPNDSKPKLTPAWTVIFFFTSIHLVALLAFLPQFFSWKAVGMAFLLYVITGGIGITLGFHRCISHRSFNVPKWLEYIFVICGTLACQGGVFEWVGLHRMHHKFSDTTPDPHDSNKGFWWSHIGWMMFEIPAKADIPRYTKDIQDDKFYQFCQNNLILIQVALGLILFALGGWPFVIWGIFVRLVFVFHFTWFVNSATHKFGYVSHESNDYSRNCWWVALLTFGEGWHNNHHAYQYSARHGLQWWEVDLTWMTIKFLSLLGLAKDIKLPPETAMANKA</sequence>
<feature type="chain" id="PRO_0000459818" description="sn-1 stearoyl-lipid 9-desaturase">
    <location>
        <begin position="1"/>
        <end position="318"/>
    </location>
</feature>
<feature type="transmembrane region" description="Helical" evidence="3">
    <location>
        <begin position="56"/>
        <end position="76"/>
    </location>
</feature>
<feature type="transmembrane region" description="Helical" evidence="3">
    <location>
        <begin position="80"/>
        <end position="100"/>
    </location>
</feature>
<feature type="transmembrane region" description="Helical" evidence="3">
    <location>
        <begin position="117"/>
        <end position="137"/>
    </location>
</feature>
<feature type="transmembrane region" description="Helical" evidence="3">
    <location>
        <begin position="201"/>
        <end position="221"/>
    </location>
</feature>
<feature type="short sequence motif" description="Histidine box-1" evidence="2">
    <location>
        <begin position="101"/>
        <end position="106"/>
    </location>
</feature>
<feature type="short sequence motif" description="Histidine box-2" evidence="2">
    <location>
        <begin position="138"/>
        <end position="142"/>
    </location>
</feature>
<feature type="short sequence motif" description="Histidine box-3" evidence="2">
    <location>
        <begin position="271"/>
        <end position="275"/>
    </location>
</feature>
<reference key="1">
    <citation type="journal article" date="1994" name="J. Biol. Chem.">
        <title>delta 9 Acyl-lipid desaturases of cyanobacteria. Molecular cloning and substrate specificities in terms of fatty acids, sn-positions, and polar head groups.</title>
        <authorList>
            <person name="Sakamoto T."/>
            <person name="Wada H."/>
            <person name="Nishida I."/>
            <person name="Ohmori M."/>
            <person name="Murata N."/>
        </authorList>
    </citation>
    <scope>NUCLEOTIDE SEQUENCE [GENOMIC DNA]</scope>
    <scope>FUNCTION</scope>
    <scope>CATALYTIC ACTIVITY</scope>
    <scope>PATHWAY</scope>
    <source>
        <strain>ATCC 27184 / PCC 6803 / N-1</strain>
    </source>
</reference>
<reference key="2">
    <citation type="journal article" date="1996" name="DNA Res.">
        <title>Sequence analysis of the genome of the unicellular cyanobacterium Synechocystis sp. strain PCC6803. II. Sequence determination of the entire genome and assignment of potential protein-coding regions.</title>
        <authorList>
            <person name="Kaneko T."/>
            <person name="Sato S."/>
            <person name="Kotani H."/>
            <person name="Tanaka A."/>
            <person name="Asamizu E."/>
            <person name="Nakamura Y."/>
            <person name="Miyajima N."/>
            <person name="Hirosawa M."/>
            <person name="Sugiura M."/>
            <person name="Sasamoto S."/>
            <person name="Kimura T."/>
            <person name="Hosouchi T."/>
            <person name="Matsuno A."/>
            <person name="Muraki A."/>
            <person name="Nakazaki N."/>
            <person name="Naruo K."/>
            <person name="Okumura S."/>
            <person name="Shimpo S."/>
            <person name="Takeuchi C."/>
            <person name="Wada T."/>
            <person name="Watanabe A."/>
            <person name="Yamada M."/>
            <person name="Yasuda M."/>
            <person name="Tabata S."/>
        </authorList>
    </citation>
    <scope>NUCLEOTIDE SEQUENCE [LARGE SCALE GENOMIC DNA]</scope>
    <source>
        <strain>ATCC 27184 / PCC 6803 / Kazusa</strain>
    </source>
</reference>
<reference key="3">
    <citation type="journal article" date="1993" name="J. Bacteriol.">
        <title>In vitro ferredoxin-dependent desaturation of fatty acids in cyanobacterial thylakoid membranes.</title>
        <authorList>
            <person name="Wada H."/>
            <person name="Schmidt H."/>
            <person name="Heinz E."/>
            <person name="Murata N."/>
        </authorList>
    </citation>
    <scope>FUNCTION</scope>
    <scope>PATHWAY</scope>
    <scope>SUBCELLULAR LOCATION</scope>
    <source>
        <strain>ATCC 27184 / PCC 6803 / N-1</strain>
    </source>
</reference>
<reference key="4">
    <citation type="journal article" date="1993" name="Plant Physiol.">
        <title>An in vivo study of substrate specificities of acyl-lipid desaturases and acyltransferases in lipid synthesis in Synechocystis PCC6803.</title>
        <authorList>
            <person name="Higashi S."/>
            <person name="Murata N."/>
        </authorList>
    </citation>
    <scope>PATHWAY</scope>
    <source>
        <strain>ATCC 27184 / PCC 6803 / N-1</strain>
    </source>
</reference>
<evidence type="ECO:0000250" key="1">
    <source>
        <dbReference type="UniProtKB" id="O00767"/>
    </source>
</evidence>
<evidence type="ECO:0000250" key="2">
    <source>
        <dbReference type="UniProtKB" id="Q54795"/>
    </source>
</evidence>
<evidence type="ECO:0000255" key="3"/>
<evidence type="ECO:0000269" key="4">
    <source>
    </source>
</evidence>
<evidence type="ECO:0000269" key="5">
    <source>
    </source>
</evidence>
<evidence type="ECO:0000303" key="6">
    <source>
    </source>
</evidence>
<evidence type="ECO:0000305" key="7"/>
<evidence type="ECO:0000305" key="8">
    <source>
    </source>
</evidence>
<evidence type="ECO:0000305" key="9">
    <source>
    </source>
</evidence>
<evidence type="ECO:0000312" key="10">
    <source>
        <dbReference type="EMBL" id="BAA03982.1"/>
    </source>
</evidence>
<evidence type="ECO:0000312" key="11">
    <source>
        <dbReference type="EMBL" id="BAA10500.1"/>
    </source>
</evidence>
<organism>
    <name type="scientific">Synechocystis sp. (strain ATCC 27184 / PCC 6803 / Kazusa)</name>
    <dbReference type="NCBI Taxonomy" id="1111708"/>
    <lineage>
        <taxon>Bacteria</taxon>
        <taxon>Bacillati</taxon>
        <taxon>Cyanobacteriota</taxon>
        <taxon>Cyanophyceae</taxon>
        <taxon>Synechococcales</taxon>
        <taxon>Merismopediaceae</taxon>
        <taxon>Synechocystis</taxon>
    </lineage>
</organism>
<keyword id="KW-0275">Fatty acid biosynthesis</keyword>
<keyword id="KW-0276">Fatty acid metabolism</keyword>
<keyword id="KW-0408">Iron</keyword>
<keyword id="KW-0444">Lipid biosynthesis</keyword>
<keyword id="KW-0443">Lipid metabolism</keyword>
<keyword id="KW-0472">Membrane</keyword>
<keyword id="KW-0560">Oxidoreductase</keyword>
<keyword id="KW-1185">Reference proteome</keyword>
<keyword id="KW-0793">Thylakoid</keyword>
<keyword id="KW-0812">Transmembrane</keyword>
<keyword id="KW-1133">Transmembrane helix</keyword>
<protein>
    <recommendedName>
        <fullName evidence="7">sn-1 stearoyl-lipid 9-desaturase</fullName>
        <ecNumber evidence="4 9">1.14.19.28</ecNumber>
    </recommendedName>
    <alternativeName>
        <fullName evidence="6">Delta(9) acyl-lipid desaturase</fullName>
    </alternativeName>
</protein>
<proteinExistence type="evidence at protein level"/>
<dbReference type="EC" id="1.14.19.28" evidence="4 9"/>
<dbReference type="EMBL" id="D16547">
    <property type="protein sequence ID" value="BAA03982.1"/>
    <property type="molecule type" value="Genomic_DNA"/>
</dbReference>
<dbReference type="EMBL" id="BA000022">
    <property type="protein sequence ID" value="BAA10500.1"/>
    <property type="molecule type" value="Genomic_DNA"/>
</dbReference>
<dbReference type="PIR" id="S75765">
    <property type="entry name" value="S75765"/>
</dbReference>
<dbReference type="SMR" id="Q55406"/>
<dbReference type="STRING" id="1148.gene:10500004"/>
<dbReference type="PaxDb" id="1148-1001256"/>
<dbReference type="EnsemblBacteria" id="BAA10500">
    <property type="protein sequence ID" value="BAA10500"/>
    <property type="gene ID" value="BAA10500"/>
</dbReference>
<dbReference type="KEGG" id="syn:sll0541"/>
<dbReference type="eggNOG" id="COG1398">
    <property type="taxonomic scope" value="Bacteria"/>
</dbReference>
<dbReference type="InParanoid" id="Q55406"/>
<dbReference type="PhylomeDB" id="Q55406"/>
<dbReference type="BioCyc" id="MetaCyc:MONOMER-19020"/>
<dbReference type="BRENDA" id="1.14.19.28">
    <property type="organism ID" value="382"/>
</dbReference>
<dbReference type="UniPathway" id="UPA00658"/>
<dbReference type="Proteomes" id="UP000001425">
    <property type="component" value="Chromosome"/>
</dbReference>
<dbReference type="GO" id="GO:0031676">
    <property type="term" value="C:plasma membrane-derived thylakoid membrane"/>
    <property type="evidence" value="ECO:0007669"/>
    <property type="project" value="UniProtKB-SubCell"/>
</dbReference>
<dbReference type="GO" id="GO:0016717">
    <property type="term" value="F:oxidoreductase activity, acting on paired donors, with oxidation of a pair of donors resulting in the reduction of molecular oxygen to two molecules of water"/>
    <property type="evidence" value="ECO:0007669"/>
    <property type="project" value="InterPro"/>
</dbReference>
<dbReference type="GO" id="GO:0006636">
    <property type="term" value="P:unsaturated fatty acid biosynthetic process"/>
    <property type="evidence" value="ECO:0007669"/>
    <property type="project" value="UniProtKB-UniPathway"/>
</dbReference>
<dbReference type="CDD" id="cd03505">
    <property type="entry name" value="Delta9-FADS-like"/>
    <property type="match status" value="1"/>
</dbReference>
<dbReference type="InterPro" id="IPR015876">
    <property type="entry name" value="Acyl-CoA_DS"/>
</dbReference>
<dbReference type="InterPro" id="IPR005804">
    <property type="entry name" value="FA_desaturase_dom"/>
</dbReference>
<dbReference type="PANTHER" id="PTHR11351">
    <property type="entry name" value="ACYL-COA DESATURASE"/>
    <property type="match status" value="1"/>
</dbReference>
<dbReference type="PANTHER" id="PTHR11351:SF31">
    <property type="entry name" value="DESATURASE 1, ISOFORM A-RELATED"/>
    <property type="match status" value="1"/>
</dbReference>
<dbReference type="Pfam" id="PF00487">
    <property type="entry name" value="FA_desaturase"/>
    <property type="match status" value="1"/>
</dbReference>
<dbReference type="PRINTS" id="PR00075">
    <property type="entry name" value="FACDDSATRASE"/>
</dbReference>
<gene>
    <name evidence="6" type="primary">desC</name>
    <name evidence="10" type="synonym">DES9</name>
    <name evidence="11" type="ordered locus">sll0541</name>
</gene>
<comment type="function">
    <text evidence="4 5">Desaturase involved in fatty acid biosynthesis (PubMed:7929259, PubMed:8419301). Introduces a double bond at carbon 9 of stearoyl groups (18:0) attached to the sn-1 position of the glycerol moiety of membrane glycerolipids (PubMed:7929259). Does not desaturate palmitic acid (16:0), palmitoleic acid (16:1) and cis-vaccenic acid (18:1) (PubMed:7929259).</text>
</comment>
<comment type="catalytic activity">
    <reaction evidence="4 9">
        <text>a 1-octadecanoyl 2-acyl-glycerolipid + 2 reduced [2Fe-2S]-[ferredoxin] + O2 + 2 H(+) = a 1-[(9Z)-octadecenoyl]-2-acyl-glycerolipid + 2 oxidized [2Fe-2S]-[ferredoxin] + 2 H2O</text>
        <dbReference type="Rhea" id="RHEA:46772"/>
        <dbReference type="Rhea" id="RHEA-COMP:10000"/>
        <dbReference type="Rhea" id="RHEA-COMP:10001"/>
        <dbReference type="ChEBI" id="CHEBI:15377"/>
        <dbReference type="ChEBI" id="CHEBI:15378"/>
        <dbReference type="ChEBI" id="CHEBI:15379"/>
        <dbReference type="ChEBI" id="CHEBI:33737"/>
        <dbReference type="ChEBI" id="CHEBI:33738"/>
        <dbReference type="ChEBI" id="CHEBI:87007"/>
        <dbReference type="ChEBI" id="CHEBI:87008"/>
        <dbReference type="EC" id="1.14.19.28"/>
    </reaction>
    <physiologicalReaction direction="left-to-right" evidence="4">
        <dbReference type="Rhea" id="RHEA:46773"/>
    </physiologicalReaction>
</comment>
<comment type="cofactor">
    <cofactor evidence="1">
        <name>Fe(2+)</name>
        <dbReference type="ChEBI" id="CHEBI:29033"/>
    </cofactor>
</comment>
<comment type="pathway">
    <text evidence="4 8 9">Lipid metabolism; polyunsaturated fatty acid biosynthesis.</text>
</comment>
<comment type="subcellular location">
    <subcellularLocation>
        <location evidence="5">Cellular thylakoid membrane</location>
        <topology evidence="3">Multi-pass membrane protein</topology>
    </subcellularLocation>
</comment>
<comment type="domain">
    <text evidence="1">The histidine box domains are involved in binding the catalytic metal ions.</text>
</comment>
<comment type="similarity">
    <text evidence="7">Belongs to the fatty acid desaturase type 2 family.</text>
</comment>
<accession>Q55406</accession>
<accession>Q55229</accession>
<accession>Q79F68</accession>
<name>DESC_SYNY3</name>